<protein>
    <recommendedName>
        <fullName evidence="1">Glycerol-3-phosphate dehydrogenase [NAD(P)+]</fullName>
        <ecNumber evidence="1">1.1.1.94</ecNumber>
    </recommendedName>
    <alternativeName>
        <fullName evidence="1">NAD(P)(+)-dependent glycerol-3-phosphate dehydrogenase</fullName>
    </alternativeName>
    <alternativeName>
        <fullName evidence="1">NAD(P)H-dependent dihydroxyacetone-phosphate reductase</fullName>
    </alternativeName>
</protein>
<gene>
    <name evidence="1" type="primary">gpsA</name>
    <name type="ordered locus">Psyc_1286</name>
</gene>
<keyword id="KW-0963">Cytoplasm</keyword>
<keyword id="KW-0444">Lipid biosynthesis</keyword>
<keyword id="KW-0443">Lipid metabolism</keyword>
<keyword id="KW-0520">NAD</keyword>
<keyword id="KW-0521">NADP</keyword>
<keyword id="KW-0547">Nucleotide-binding</keyword>
<keyword id="KW-0560">Oxidoreductase</keyword>
<keyword id="KW-0594">Phospholipid biosynthesis</keyword>
<keyword id="KW-1208">Phospholipid metabolism</keyword>
<keyword id="KW-1185">Reference proteome</keyword>
<reference key="1">
    <citation type="journal article" date="2010" name="Appl. Environ. Microbiol.">
        <title>The genome sequence of Psychrobacter arcticus 273-4, a psychroactive Siberian permafrost bacterium, reveals mechanisms for adaptation to low-temperature growth.</title>
        <authorList>
            <person name="Ayala-del-Rio H.L."/>
            <person name="Chain P.S."/>
            <person name="Grzymski J.J."/>
            <person name="Ponder M.A."/>
            <person name="Ivanova N."/>
            <person name="Bergholz P.W."/>
            <person name="Di Bartolo G."/>
            <person name="Hauser L."/>
            <person name="Land M."/>
            <person name="Bakermans C."/>
            <person name="Rodrigues D."/>
            <person name="Klappenbach J."/>
            <person name="Zarka D."/>
            <person name="Larimer F."/>
            <person name="Richardson P."/>
            <person name="Murray A."/>
            <person name="Thomashow M."/>
            <person name="Tiedje J.M."/>
        </authorList>
    </citation>
    <scope>NUCLEOTIDE SEQUENCE [LARGE SCALE GENOMIC DNA]</scope>
    <source>
        <strain>DSM 17307 / VKM B-2377 / 273-4</strain>
    </source>
</reference>
<feature type="chain" id="PRO_0000255348" description="Glycerol-3-phosphate dehydrogenase [NAD(P)+]">
    <location>
        <begin position="1"/>
        <end position="431"/>
    </location>
</feature>
<feature type="region of interest" description="Disordered" evidence="2">
    <location>
        <begin position="1"/>
        <end position="25"/>
    </location>
</feature>
<feature type="compositionally biased region" description="Polar residues" evidence="2">
    <location>
        <begin position="1"/>
        <end position="19"/>
    </location>
</feature>
<feature type="active site" description="Proton acceptor" evidence="1">
    <location>
        <position position="256"/>
    </location>
</feature>
<feature type="binding site" evidence="1">
    <location>
        <position position="79"/>
    </location>
    <ligand>
        <name>NADPH</name>
        <dbReference type="ChEBI" id="CHEBI:57783"/>
    </ligand>
</feature>
<feature type="binding site" evidence="1">
    <location>
        <position position="80"/>
    </location>
    <ligand>
        <name>NADPH</name>
        <dbReference type="ChEBI" id="CHEBI:57783"/>
    </ligand>
</feature>
<feature type="binding site" evidence="1">
    <location>
        <position position="100"/>
    </location>
    <ligand>
        <name>NADPH</name>
        <dbReference type="ChEBI" id="CHEBI:57783"/>
    </ligand>
</feature>
<feature type="binding site" evidence="1">
    <location>
        <position position="173"/>
    </location>
    <ligand>
        <name>NADPH</name>
        <dbReference type="ChEBI" id="CHEBI:57783"/>
    </ligand>
</feature>
<feature type="binding site" evidence="1">
    <location>
        <position position="173"/>
    </location>
    <ligand>
        <name>sn-glycerol 3-phosphate</name>
        <dbReference type="ChEBI" id="CHEBI:57597"/>
    </ligand>
</feature>
<feature type="binding site" evidence="1">
    <location>
        <position position="201"/>
    </location>
    <ligand>
        <name>sn-glycerol 3-phosphate</name>
        <dbReference type="ChEBI" id="CHEBI:57597"/>
    </ligand>
</feature>
<feature type="binding site" evidence="1">
    <location>
        <position position="205"/>
    </location>
    <ligand>
        <name>NADPH</name>
        <dbReference type="ChEBI" id="CHEBI:57783"/>
    </ligand>
</feature>
<feature type="binding site" evidence="1">
    <location>
        <position position="256"/>
    </location>
    <ligand>
        <name>sn-glycerol 3-phosphate</name>
        <dbReference type="ChEBI" id="CHEBI:57597"/>
    </ligand>
</feature>
<feature type="binding site" evidence="1">
    <location>
        <position position="309"/>
    </location>
    <ligand>
        <name>sn-glycerol 3-phosphate</name>
        <dbReference type="ChEBI" id="CHEBI:57597"/>
    </ligand>
</feature>
<feature type="binding site" evidence="1">
    <location>
        <position position="319"/>
    </location>
    <ligand>
        <name>sn-glycerol 3-phosphate</name>
        <dbReference type="ChEBI" id="CHEBI:57597"/>
    </ligand>
</feature>
<feature type="binding site" evidence="1">
    <location>
        <position position="320"/>
    </location>
    <ligand>
        <name>NADPH</name>
        <dbReference type="ChEBI" id="CHEBI:57783"/>
    </ligand>
</feature>
<feature type="binding site" evidence="1">
    <location>
        <position position="320"/>
    </location>
    <ligand>
        <name>sn-glycerol 3-phosphate</name>
        <dbReference type="ChEBI" id="CHEBI:57597"/>
    </ligand>
</feature>
<feature type="binding site" evidence="1">
    <location>
        <position position="321"/>
    </location>
    <ligand>
        <name>sn-glycerol 3-phosphate</name>
        <dbReference type="ChEBI" id="CHEBI:57597"/>
    </ligand>
</feature>
<feature type="binding site" evidence="1">
    <location>
        <position position="346"/>
    </location>
    <ligand>
        <name>NADPH</name>
        <dbReference type="ChEBI" id="CHEBI:57783"/>
    </ligand>
</feature>
<accession>Q4FS72</accession>
<sequence>MTSANDKSTDTNVDSTQAEQKMAEKQNKLLSGIIERATKSGIGRKKLNPSAVESAVAKNMAEIHNNPTKLRLVVLGGGSFGTAMANLAARNGCDTTLWVRNKRTVKAMAKSQMNKKYLPGYKLDDRLKYSHELQAAVKDTDIIFIAVPGLAFRETLKSIAPFISGQSIVSLTKGMEKDTFALMSDIIKEELPEVNFGVMSGPNLAIEIMKNMPSATVIASESEPLRHAVQAALHSAFFRVFASDDIRGVELGGALKNIYAIAMGMAAAYEVGENTKAMILTRGLAEMSRFGVHAGANPLTFLGLSGVGDLYATCSSELSRNYRIGNMLGRGMTIDAAVKKLGQTAEGVNTIQQVHEKATKEGIYMPITHALHAVIYEDKAALGVALHLMEAGFRSDVEFVMEHDHSNASLTAQMQTANNQAKNEKTKPDNK</sequence>
<comment type="function">
    <text evidence="1">Catalyzes the reduction of the glycolytic intermediate dihydroxyacetone phosphate (DHAP) to sn-glycerol 3-phosphate (G3P), the key precursor for phospholipid synthesis.</text>
</comment>
<comment type="catalytic activity">
    <reaction evidence="1">
        <text>sn-glycerol 3-phosphate + NAD(+) = dihydroxyacetone phosphate + NADH + H(+)</text>
        <dbReference type="Rhea" id="RHEA:11092"/>
        <dbReference type="ChEBI" id="CHEBI:15378"/>
        <dbReference type="ChEBI" id="CHEBI:57540"/>
        <dbReference type="ChEBI" id="CHEBI:57597"/>
        <dbReference type="ChEBI" id="CHEBI:57642"/>
        <dbReference type="ChEBI" id="CHEBI:57945"/>
        <dbReference type="EC" id="1.1.1.94"/>
    </reaction>
    <physiologicalReaction direction="right-to-left" evidence="1">
        <dbReference type="Rhea" id="RHEA:11094"/>
    </physiologicalReaction>
</comment>
<comment type="catalytic activity">
    <reaction evidence="1">
        <text>sn-glycerol 3-phosphate + NADP(+) = dihydroxyacetone phosphate + NADPH + H(+)</text>
        <dbReference type="Rhea" id="RHEA:11096"/>
        <dbReference type="ChEBI" id="CHEBI:15378"/>
        <dbReference type="ChEBI" id="CHEBI:57597"/>
        <dbReference type="ChEBI" id="CHEBI:57642"/>
        <dbReference type="ChEBI" id="CHEBI:57783"/>
        <dbReference type="ChEBI" id="CHEBI:58349"/>
        <dbReference type="EC" id="1.1.1.94"/>
    </reaction>
    <physiologicalReaction direction="right-to-left" evidence="1">
        <dbReference type="Rhea" id="RHEA:11098"/>
    </physiologicalReaction>
</comment>
<comment type="pathway">
    <text evidence="1">Membrane lipid metabolism; glycerophospholipid metabolism.</text>
</comment>
<comment type="subcellular location">
    <subcellularLocation>
        <location evidence="1">Cytoplasm</location>
    </subcellularLocation>
</comment>
<comment type="similarity">
    <text evidence="1">Belongs to the NAD-dependent glycerol-3-phosphate dehydrogenase family.</text>
</comment>
<proteinExistence type="inferred from homology"/>
<evidence type="ECO:0000255" key="1">
    <source>
        <dbReference type="HAMAP-Rule" id="MF_00394"/>
    </source>
</evidence>
<evidence type="ECO:0000256" key="2">
    <source>
        <dbReference type="SAM" id="MobiDB-lite"/>
    </source>
</evidence>
<dbReference type="EC" id="1.1.1.94" evidence="1"/>
<dbReference type="EMBL" id="CP000082">
    <property type="protein sequence ID" value="AAZ19136.1"/>
    <property type="molecule type" value="Genomic_DNA"/>
</dbReference>
<dbReference type="RefSeq" id="WP_041757689.1">
    <property type="nucleotide sequence ID" value="NC_007204.1"/>
</dbReference>
<dbReference type="SMR" id="Q4FS72"/>
<dbReference type="STRING" id="259536.Psyc_1286"/>
<dbReference type="KEGG" id="par:Psyc_1286"/>
<dbReference type="eggNOG" id="COG0240">
    <property type="taxonomic scope" value="Bacteria"/>
</dbReference>
<dbReference type="HOGENOM" id="CLU_033449_0_1_6"/>
<dbReference type="OrthoDB" id="9812273at2"/>
<dbReference type="UniPathway" id="UPA00940"/>
<dbReference type="Proteomes" id="UP000000546">
    <property type="component" value="Chromosome"/>
</dbReference>
<dbReference type="GO" id="GO:0005829">
    <property type="term" value="C:cytosol"/>
    <property type="evidence" value="ECO:0007669"/>
    <property type="project" value="TreeGrafter"/>
</dbReference>
<dbReference type="GO" id="GO:0047952">
    <property type="term" value="F:glycerol-3-phosphate dehydrogenase [NAD(P)+] activity"/>
    <property type="evidence" value="ECO:0007669"/>
    <property type="project" value="UniProtKB-UniRule"/>
</dbReference>
<dbReference type="GO" id="GO:0051287">
    <property type="term" value="F:NAD binding"/>
    <property type="evidence" value="ECO:0007669"/>
    <property type="project" value="InterPro"/>
</dbReference>
<dbReference type="GO" id="GO:0005975">
    <property type="term" value="P:carbohydrate metabolic process"/>
    <property type="evidence" value="ECO:0007669"/>
    <property type="project" value="InterPro"/>
</dbReference>
<dbReference type="GO" id="GO:0046167">
    <property type="term" value="P:glycerol-3-phosphate biosynthetic process"/>
    <property type="evidence" value="ECO:0007669"/>
    <property type="project" value="UniProtKB-UniRule"/>
</dbReference>
<dbReference type="GO" id="GO:0046168">
    <property type="term" value="P:glycerol-3-phosphate catabolic process"/>
    <property type="evidence" value="ECO:0007669"/>
    <property type="project" value="InterPro"/>
</dbReference>
<dbReference type="GO" id="GO:0046474">
    <property type="term" value="P:glycerophospholipid biosynthetic process"/>
    <property type="evidence" value="ECO:0007669"/>
    <property type="project" value="TreeGrafter"/>
</dbReference>
<dbReference type="FunFam" id="1.10.1040.10:FF:000001">
    <property type="entry name" value="Glycerol-3-phosphate dehydrogenase [NAD(P)+]"/>
    <property type="match status" value="1"/>
</dbReference>
<dbReference type="FunFam" id="3.40.50.720:FF:000019">
    <property type="entry name" value="Glycerol-3-phosphate dehydrogenase [NAD(P)+]"/>
    <property type="match status" value="1"/>
</dbReference>
<dbReference type="Gene3D" id="1.10.1040.10">
    <property type="entry name" value="N-(1-d-carboxylethyl)-l-norvaline Dehydrogenase, domain 2"/>
    <property type="match status" value="1"/>
</dbReference>
<dbReference type="Gene3D" id="3.40.50.720">
    <property type="entry name" value="NAD(P)-binding Rossmann-like Domain"/>
    <property type="match status" value="1"/>
</dbReference>
<dbReference type="HAMAP" id="MF_00394">
    <property type="entry name" value="NAD_Glyc3P_dehydrog"/>
    <property type="match status" value="1"/>
</dbReference>
<dbReference type="InterPro" id="IPR008927">
    <property type="entry name" value="6-PGluconate_DH-like_C_sf"/>
</dbReference>
<dbReference type="InterPro" id="IPR013328">
    <property type="entry name" value="6PGD_dom2"/>
</dbReference>
<dbReference type="InterPro" id="IPR006168">
    <property type="entry name" value="G3P_DH_NAD-dep"/>
</dbReference>
<dbReference type="InterPro" id="IPR006109">
    <property type="entry name" value="G3P_DH_NAD-dep_C"/>
</dbReference>
<dbReference type="InterPro" id="IPR011128">
    <property type="entry name" value="G3P_DH_NAD-dep_N"/>
</dbReference>
<dbReference type="InterPro" id="IPR036291">
    <property type="entry name" value="NAD(P)-bd_dom_sf"/>
</dbReference>
<dbReference type="NCBIfam" id="NF000940">
    <property type="entry name" value="PRK00094.1-2"/>
    <property type="match status" value="1"/>
</dbReference>
<dbReference type="NCBIfam" id="NF000942">
    <property type="entry name" value="PRK00094.1-4"/>
    <property type="match status" value="1"/>
</dbReference>
<dbReference type="NCBIfam" id="NF000944">
    <property type="entry name" value="PRK00094.2-2"/>
    <property type="match status" value="1"/>
</dbReference>
<dbReference type="PANTHER" id="PTHR11728">
    <property type="entry name" value="GLYCEROL-3-PHOSPHATE DEHYDROGENASE"/>
    <property type="match status" value="1"/>
</dbReference>
<dbReference type="PANTHER" id="PTHR11728:SF1">
    <property type="entry name" value="GLYCEROL-3-PHOSPHATE DEHYDROGENASE [NAD(+)] 2, CHLOROPLASTIC"/>
    <property type="match status" value="1"/>
</dbReference>
<dbReference type="Pfam" id="PF07479">
    <property type="entry name" value="NAD_Gly3P_dh_C"/>
    <property type="match status" value="1"/>
</dbReference>
<dbReference type="Pfam" id="PF01210">
    <property type="entry name" value="NAD_Gly3P_dh_N"/>
    <property type="match status" value="1"/>
</dbReference>
<dbReference type="PRINTS" id="PR00077">
    <property type="entry name" value="GPDHDRGNASE"/>
</dbReference>
<dbReference type="SUPFAM" id="SSF48179">
    <property type="entry name" value="6-phosphogluconate dehydrogenase C-terminal domain-like"/>
    <property type="match status" value="1"/>
</dbReference>
<dbReference type="SUPFAM" id="SSF51735">
    <property type="entry name" value="NAD(P)-binding Rossmann-fold domains"/>
    <property type="match status" value="1"/>
</dbReference>
<dbReference type="PROSITE" id="PS00957">
    <property type="entry name" value="NAD_G3PDH"/>
    <property type="match status" value="1"/>
</dbReference>
<organism>
    <name type="scientific">Psychrobacter arcticus (strain DSM 17307 / VKM B-2377 / 273-4)</name>
    <dbReference type="NCBI Taxonomy" id="259536"/>
    <lineage>
        <taxon>Bacteria</taxon>
        <taxon>Pseudomonadati</taxon>
        <taxon>Pseudomonadota</taxon>
        <taxon>Gammaproteobacteria</taxon>
        <taxon>Moraxellales</taxon>
        <taxon>Moraxellaceae</taxon>
        <taxon>Psychrobacter</taxon>
    </lineage>
</organism>
<name>GPDA_PSYA2</name>